<accession>Q3T0A6</accession>
<name>BCL7B_BOVIN</name>
<evidence type="ECO:0000250" key="1">
    <source>
        <dbReference type="UniProtKB" id="Q921K9"/>
    </source>
</evidence>
<evidence type="ECO:0000250" key="2">
    <source>
        <dbReference type="UniProtKB" id="Q9BQE9"/>
    </source>
</evidence>
<evidence type="ECO:0000256" key="3">
    <source>
        <dbReference type="SAM" id="MobiDB-lite"/>
    </source>
</evidence>
<evidence type="ECO:0000305" key="4"/>
<reference key="1">
    <citation type="submission" date="2005-08" db="EMBL/GenBank/DDBJ databases">
        <authorList>
            <consortium name="NIH - Mammalian Gene Collection (MGC) project"/>
        </authorList>
    </citation>
    <scope>NUCLEOTIDE SEQUENCE [LARGE SCALE MRNA]</scope>
    <source>
        <strain>Crossbred X Angus</strain>
        <tissue>Ileum</tissue>
    </source>
</reference>
<keyword id="KW-0053">Apoptosis</keyword>
<keyword id="KW-0221">Differentiation</keyword>
<keyword id="KW-0597">Phosphoprotein</keyword>
<keyword id="KW-1185">Reference proteome</keyword>
<keyword id="KW-0879">Wnt signaling pathway</keyword>
<sequence length="202" mass="22197">MSGRSVRAETRSRAKDDIKKVMAAIEKVRKWEKKWVTVGDTSLRIFKWVPVTDSKEKEKSKSNSSAAREPNGFPSDASANSSLLLEFQDENSNQSSVSDVYQLKVDSSTNSSPSPQQSESLSPAHTSDFRTDDSQPPTLGQEILEEPSLPASEVADEPPTLTKEEPVPLETQIAEEEEDSSAPPLKRFCMDQPAVPQTASES</sequence>
<organism>
    <name type="scientific">Bos taurus</name>
    <name type="common">Bovine</name>
    <dbReference type="NCBI Taxonomy" id="9913"/>
    <lineage>
        <taxon>Eukaryota</taxon>
        <taxon>Metazoa</taxon>
        <taxon>Chordata</taxon>
        <taxon>Craniata</taxon>
        <taxon>Vertebrata</taxon>
        <taxon>Euteleostomi</taxon>
        <taxon>Mammalia</taxon>
        <taxon>Eutheria</taxon>
        <taxon>Laurasiatheria</taxon>
        <taxon>Artiodactyla</taxon>
        <taxon>Ruminantia</taxon>
        <taxon>Pecora</taxon>
        <taxon>Bovidae</taxon>
        <taxon>Bovinae</taxon>
        <taxon>Bos</taxon>
    </lineage>
</organism>
<comment type="function">
    <text evidence="1 2">Positive regulator of apoptosis. Plays a role in the Wnt signaling pathway, negatively regulating the expression of Wnt signaling components CTNNB1 and HMGA1. Involved in cell cycle progression, maintenance of the nuclear structure and stem cell differentiation. May play a role in lung tumor development or progression.</text>
</comment>
<comment type="similarity">
    <text evidence="4">Belongs to the BCL7 family.</text>
</comment>
<dbReference type="EMBL" id="BC102475">
    <property type="protein sequence ID" value="AAI02476.1"/>
    <property type="molecule type" value="mRNA"/>
</dbReference>
<dbReference type="RefSeq" id="NP_001029947.1">
    <property type="nucleotide sequence ID" value="NM_001034775.2"/>
</dbReference>
<dbReference type="FunCoup" id="Q3T0A6">
    <property type="interactions" value="3417"/>
</dbReference>
<dbReference type="STRING" id="9913.ENSBTAP00000027371"/>
<dbReference type="PaxDb" id="9913-ENSBTAP00000027371"/>
<dbReference type="GeneID" id="615062"/>
<dbReference type="KEGG" id="bta:615062"/>
<dbReference type="CTD" id="9275"/>
<dbReference type="VEuPathDB" id="HostDB:ENSBTAG00000020544"/>
<dbReference type="eggNOG" id="KOG4095">
    <property type="taxonomic scope" value="Eukaryota"/>
</dbReference>
<dbReference type="HOGENOM" id="CLU_110835_1_0_1"/>
<dbReference type="InParanoid" id="Q3T0A6"/>
<dbReference type="OMA" id="WVPVTDN"/>
<dbReference type="OrthoDB" id="5989898at2759"/>
<dbReference type="TreeFam" id="TF317441"/>
<dbReference type="Proteomes" id="UP000009136">
    <property type="component" value="Chromosome 25"/>
</dbReference>
<dbReference type="Bgee" id="ENSBTAG00000020544">
    <property type="expression patterns" value="Expressed in trachea and 105 other cell types or tissues"/>
</dbReference>
<dbReference type="GO" id="GO:0016514">
    <property type="term" value="C:SWI/SNF complex"/>
    <property type="evidence" value="ECO:0007669"/>
    <property type="project" value="UniProtKB-ARBA"/>
</dbReference>
<dbReference type="GO" id="GO:0006915">
    <property type="term" value="P:apoptotic process"/>
    <property type="evidence" value="ECO:0007669"/>
    <property type="project" value="UniProtKB-KW"/>
</dbReference>
<dbReference type="GO" id="GO:0030154">
    <property type="term" value="P:cell differentiation"/>
    <property type="evidence" value="ECO:0007669"/>
    <property type="project" value="UniProtKB-KW"/>
</dbReference>
<dbReference type="GO" id="GO:0016055">
    <property type="term" value="P:Wnt signaling pathway"/>
    <property type="evidence" value="ECO:0007669"/>
    <property type="project" value="UniProtKB-KW"/>
</dbReference>
<dbReference type="InterPro" id="IPR006804">
    <property type="entry name" value="BCL7"/>
</dbReference>
<dbReference type="PANTHER" id="PTHR12767:SF5">
    <property type="entry name" value="B-CELL CLL_LYMPHOMA 7 PROTEIN FAMILY MEMBER B"/>
    <property type="match status" value="1"/>
</dbReference>
<dbReference type="PANTHER" id="PTHR12767">
    <property type="entry name" value="BCL7 RELATED"/>
    <property type="match status" value="1"/>
</dbReference>
<dbReference type="Pfam" id="PF04714">
    <property type="entry name" value="BCL_N"/>
    <property type="match status" value="1"/>
</dbReference>
<feature type="chain" id="PRO_0000239828" description="B-cell CLL/lymphoma 7 protein family member B">
    <location>
        <begin position="1"/>
        <end position="202"/>
    </location>
</feature>
<feature type="region of interest" description="Disordered" evidence="3">
    <location>
        <begin position="53"/>
        <end position="202"/>
    </location>
</feature>
<feature type="compositionally biased region" description="Polar residues" evidence="3">
    <location>
        <begin position="90"/>
        <end position="99"/>
    </location>
</feature>
<feature type="compositionally biased region" description="Low complexity" evidence="3">
    <location>
        <begin position="107"/>
        <end position="123"/>
    </location>
</feature>
<feature type="modified residue" description="Phosphoserine" evidence="2">
    <location>
        <position position="114"/>
    </location>
</feature>
<feature type="modified residue" description="Phosphoserine" evidence="2">
    <location>
        <position position="118"/>
    </location>
</feature>
<feature type="modified residue" description="Phosphoserine" evidence="1">
    <location>
        <position position="120"/>
    </location>
</feature>
<feature type="modified residue" description="Phosphoserine" evidence="2">
    <location>
        <position position="122"/>
    </location>
</feature>
<feature type="modified residue" description="Phosphoserine" evidence="1">
    <location>
        <position position="127"/>
    </location>
</feature>
<feature type="modified residue" description="Phosphoserine" evidence="1">
    <location>
        <position position="148"/>
    </location>
</feature>
<feature type="modified residue" description="Phosphoserine" evidence="1">
    <location>
        <position position="152"/>
    </location>
</feature>
<proteinExistence type="evidence at transcript level"/>
<protein>
    <recommendedName>
        <fullName>B-cell CLL/lymphoma 7 protein family member B</fullName>
    </recommendedName>
</protein>
<gene>
    <name type="primary">BCL7B</name>
</gene>